<dbReference type="EC" id="2.7.11.1" evidence="1"/>
<dbReference type="EMBL" id="AL662984">
    <property type="protein sequence ID" value="CAD41144.2"/>
    <property type="molecule type" value="Genomic_DNA"/>
</dbReference>
<dbReference type="EMBL" id="AP008210">
    <property type="protein sequence ID" value="BAF15310.1"/>
    <property type="status" value="ALT_SEQ"/>
    <property type="molecule type" value="Genomic_DNA"/>
</dbReference>
<dbReference type="EMBL" id="AP014960">
    <property type="protein sequence ID" value="BAS90216.1"/>
    <property type="status" value="ALT_SEQ"/>
    <property type="molecule type" value="Genomic_DNA"/>
</dbReference>
<dbReference type="EMBL" id="CM000141">
    <property type="protein sequence ID" value="EEE61393.1"/>
    <property type="molecule type" value="Genomic_DNA"/>
</dbReference>
<dbReference type="SMR" id="Q7XUN6"/>
<dbReference type="FunCoup" id="Q7XUN6">
    <property type="interactions" value="294"/>
</dbReference>
<dbReference type="STRING" id="39947.Q7XUN6"/>
<dbReference type="GlyCosmos" id="Q7XUN6">
    <property type="glycosylation" value="9 sites, No reported glycans"/>
</dbReference>
<dbReference type="PaxDb" id="39947-Q7XUN6"/>
<dbReference type="KEGG" id="dosa:Os04g0531400"/>
<dbReference type="KEGG" id="osa:4336489"/>
<dbReference type="eggNOG" id="ENOG502QSJ4">
    <property type="taxonomic scope" value="Eukaryota"/>
</dbReference>
<dbReference type="HOGENOM" id="CLU_000288_62_3_1"/>
<dbReference type="InParanoid" id="Q7XUN6"/>
<dbReference type="OrthoDB" id="543442at2759"/>
<dbReference type="Proteomes" id="UP000000763">
    <property type="component" value="Chromosome 4"/>
</dbReference>
<dbReference type="Proteomes" id="UP000007752">
    <property type="component" value="Chromosome 4"/>
</dbReference>
<dbReference type="Proteomes" id="UP000059680">
    <property type="component" value="Chromosome 4"/>
</dbReference>
<dbReference type="GO" id="GO:0005886">
    <property type="term" value="C:plasma membrane"/>
    <property type="evidence" value="ECO:0000250"/>
    <property type="project" value="UniProtKB"/>
</dbReference>
<dbReference type="GO" id="GO:0005524">
    <property type="term" value="F:ATP binding"/>
    <property type="evidence" value="ECO:0007669"/>
    <property type="project" value="UniProtKB-KW"/>
</dbReference>
<dbReference type="GO" id="GO:0030246">
    <property type="term" value="F:carbohydrate binding"/>
    <property type="evidence" value="ECO:0007669"/>
    <property type="project" value="UniProtKB-KW"/>
</dbReference>
<dbReference type="GO" id="GO:0106310">
    <property type="term" value="F:protein serine kinase activity"/>
    <property type="evidence" value="ECO:0007669"/>
    <property type="project" value="RHEA"/>
</dbReference>
<dbReference type="GO" id="GO:0004675">
    <property type="term" value="F:transmembrane receptor protein serine/threonine kinase activity"/>
    <property type="evidence" value="ECO:0000250"/>
    <property type="project" value="UniProtKB"/>
</dbReference>
<dbReference type="GO" id="GO:0042742">
    <property type="term" value="P:defense response to bacterium"/>
    <property type="evidence" value="ECO:0000318"/>
    <property type="project" value="GO_Central"/>
</dbReference>
<dbReference type="GO" id="GO:0002229">
    <property type="term" value="P:defense response to oomycetes"/>
    <property type="evidence" value="ECO:0000318"/>
    <property type="project" value="GO_Central"/>
</dbReference>
<dbReference type="GO" id="GO:1901001">
    <property type="term" value="P:negative regulation of response to salt stress"/>
    <property type="evidence" value="ECO:0000315"/>
    <property type="project" value="UniProtKB"/>
</dbReference>
<dbReference type="GO" id="GO:0006468">
    <property type="term" value="P:protein phosphorylation"/>
    <property type="evidence" value="ECO:0000250"/>
    <property type="project" value="UniProtKB"/>
</dbReference>
<dbReference type="CDD" id="cd06899">
    <property type="entry name" value="lectin_legume_LecRK_Arcelin_ConA"/>
    <property type="match status" value="1"/>
</dbReference>
<dbReference type="CDD" id="cd14066">
    <property type="entry name" value="STKc_IRAK"/>
    <property type="match status" value="1"/>
</dbReference>
<dbReference type="FunFam" id="2.60.120.200:FF:000112">
    <property type="entry name" value="L-type lectin-domain containing receptor kinase V.9"/>
    <property type="match status" value="1"/>
</dbReference>
<dbReference type="FunFam" id="3.30.200.20:FF:000112">
    <property type="entry name" value="Lectin-domain containing receptor kinase A4.3"/>
    <property type="match status" value="1"/>
</dbReference>
<dbReference type="FunFam" id="1.10.510.10:FF:000517">
    <property type="entry name" value="Putative receptor kinase Lecrk"/>
    <property type="match status" value="1"/>
</dbReference>
<dbReference type="Gene3D" id="2.60.120.200">
    <property type="match status" value="1"/>
</dbReference>
<dbReference type="Gene3D" id="3.30.200.20">
    <property type="entry name" value="Phosphorylase Kinase, domain 1"/>
    <property type="match status" value="1"/>
</dbReference>
<dbReference type="Gene3D" id="1.10.510.10">
    <property type="entry name" value="Transferase(Phosphotransferase) domain 1"/>
    <property type="match status" value="1"/>
</dbReference>
<dbReference type="InterPro" id="IPR013320">
    <property type="entry name" value="ConA-like_dom_sf"/>
</dbReference>
<dbReference type="InterPro" id="IPR011009">
    <property type="entry name" value="Kinase-like_dom_sf"/>
</dbReference>
<dbReference type="InterPro" id="IPR050528">
    <property type="entry name" value="L-type_Lectin-RKs"/>
</dbReference>
<dbReference type="InterPro" id="IPR001220">
    <property type="entry name" value="Legume_lectin_dom"/>
</dbReference>
<dbReference type="InterPro" id="IPR000719">
    <property type="entry name" value="Prot_kinase_dom"/>
</dbReference>
<dbReference type="InterPro" id="IPR017441">
    <property type="entry name" value="Protein_kinase_ATP_BS"/>
</dbReference>
<dbReference type="InterPro" id="IPR008271">
    <property type="entry name" value="Ser/Thr_kinase_AS"/>
</dbReference>
<dbReference type="PANTHER" id="PTHR27007">
    <property type="match status" value="1"/>
</dbReference>
<dbReference type="Pfam" id="PF00139">
    <property type="entry name" value="Lectin_legB"/>
    <property type="match status" value="1"/>
</dbReference>
<dbReference type="Pfam" id="PF00069">
    <property type="entry name" value="Pkinase"/>
    <property type="match status" value="1"/>
</dbReference>
<dbReference type="SMART" id="SM00220">
    <property type="entry name" value="S_TKc"/>
    <property type="match status" value="1"/>
</dbReference>
<dbReference type="SUPFAM" id="SSF49899">
    <property type="entry name" value="Concanavalin A-like lectins/glucanases"/>
    <property type="match status" value="1"/>
</dbReference>
<dbReference type="SUPFAM" id="SSF56112">
    <property type="entry name" value="Protein kinase-like (PK-like)"/>
    <property type="match status" value="1"/>
</dbReference>
<dbReference type="PROSITE" id="PS00107">
    <property type="entry name" value="PROTEIN_KINASE_ATP"/>
    <property type="match status" value="1"/>
</dbReference>
<dbReference type="PROSITE" id="PS50011">
    <property type="entry name" value="PROTEIN_KINASE_DOM"/>
    <property type="match status" value="1"/>
</dbReference>
<dbReference type="PROSITE" id="PS00108">
    <property type="entry name" value="PROTEIN_KINASE_ST"/>
    <property type="match status" value="1"/>
</dbReference>
<gene>
    <name evidence="6" type="primary">SIT2</name>
    <name evidence="8" type="ordered locus">Os04g0531400</name>
    <name evidence="7" type="ordered locus">LOC_Os04g44900</name>
    <name evidence="10" type="ORF">OsJ_15568</name>
    <name evidence="9" type="ORF">OSJNBa0081C01.16</name>
</gene>
<accession>Q7XUN6</accession>
<accession>Q0JBH7</accession>
<name>SIT2_ORYSJ</name>
<evidence type="ECO:0000250" key="1">
    <source>
        <dbReference type="UniProtKB" id="Q6H7D2"/>
    </source>
</evidence>
<evidence type="ECO:0000255" key="2"/>
<evidence type="ECO:0000255" key="3">
    <source>
        <dbReference type="PROSITE-ProRule" id="PRU00159"/>
    </source>
</evidence>
<evidence type="ECO:0000255" key="4">
    <source>
        <dbReference type="PROSITE-ProRule" id="PRU00498"/>
    </source>
</evidence>
<evidence type="ECO:0000269" key="5">
    <source>
    </source>
</evidence>
<evidence type="ECO:0000303" key="6">
    <source>
    </source>
</evidence>
<evidence type="ECO:0000305" key="7"/>
<evidence type="ECO:0000312" key="8">
    <source>
        <dbReference type="EMBL" id="BAS90216.1"/>
    </source>
</evidence>
<evidence type="ECO:0000312" key="9">
    <source>
        <dbReference type="EMBL" id="CAD41144.2"/>
    </source>
</evidence>
<evidence type="ECO:0000312" key="10">
    <source>
        <dbReference type="EMBL" id="EEE61393.1"/>
    </source>
</evidence>
<comment type="function">
    <text evidence="5">Lectin-domain containing receptor kinase involved in salt stress response (PubMed:24907341). Acts as a negative regulator of salt tolerance (PubMed:24907341).</text>
</comment>
<comment type="catalytic activity">
    <reaction evidence="1">
        <text>L-seryl-[protein] + ATP = O-phospho-L-seryl-[protein] + ADP + H(+)</text>
        <dbReference type="Rhea" id="RHEA:17989"/>
        <dbReference type="Rhea" id="RHEA-COMP:9863"/>
        <dbReference type="Rhea" id="RHEA-COMP:11604"/>
        <dbReference type="ChEBI" id="CHEBI:15378"/>
        <dbReference type="ChEBI" id="CHEBI:29999"/>
        <dbReference type="ChEBI" id="CHEBI:30616"/>
        <dbReference type="ChEBI" id="CHEBI:83421"/>
        <dbReference type="ChEBI" id="CHEBI:456216"/>
        <dbReference type="EC" id="2.7.11.1"/>
    </reaction>
    <physiologicalReaction direction="left-to-right" evidence="1">
        <dbReference type="Rhea" id="RHEA:17990"/>
    </physiologicalReaction>
</comment>
<comment type="catalytic activity">
    <reaction evidence="1">
        <text>L-threonyl-[protein] + ATP = O-phospho-L-threonyl-[protein] + ADP + H(+)</text>
        <dbReference type="Rhea" id="RHEA:46608"/>
        <dbReference type="Rhea" id="RHEA-COMP:11060"/>
        <dbReference type="Rhea" id="RHEA-COMP:11605"/>
        <dbReference type="ChEBI" id="CHEBI:15378"/>
        <dbReference type="ChEBI" id="CHEBI:30013"/>
        <dbReference type="ChEBI" id="CHEBI:30616"/>
        <dbReference type="ChEBI" id="CHEBI:61977"/>
        <dbReference type="ChEBI" id="CHEBI:456216"/>
        <dbReference type="EC" id="2.7.11.1"/>
    </reaction>
    <physiologicalReaction direction="left-to-right" evidence="1">
        <dbReference type="Rhea" id="RHEA:46609"/>
    </physiologicalReaction>
</comment>
<comment type="subcellular location">
    <subcellularLocation>
        <location evidence="2">Cell membrane</location>
        <topology evidence="2">Single-pass type I membrane protein</topology>
    </subcellularLocation>
</comment>
<comment type="tissue specificity">
    <text evidence="5">Mainly expressed in root epidermal cells.</text>
</comment>
<comment type="induction">
    <text evidence="5">Induced by salt stress.</text>
</comment>
<comment type="miscellaneous">
    <text evidence="5">The gain-of-function mutant sit2-D (T-DNA tagging) exhibits reduced tolerance to salt stress.</text>
</comment>
<comment type="similarity">
    <text evidence="7">In the C-terminal section; belongs to the protein kinase superfamily. Ser/Thr protein kinase family.</text>
</comment>
<comment type="similarity">
    <text evidence="7">In the N-terminal section; belongs to the leguminous lectin family.</text>
</comment>
<comment type="sequence caution" evidence="7">
    <conflict type="erroneous gene model prediction">
        <sequence resource="EMBL-CDS" id="BAF15310"/>
    </conflict>
</comment>
<comment type="sequence caution" evidence="7">
    <conflict type="erroneous gene model prediction">
        <sequence resource="EMBL-CDS" id="BAS90216"/>
    </conflict>
</comment>
<feature type="signal peptide" evidence="2">
    <location>
        <begin position="1"/>
        <end position="27"/>
    </location>
</feature>
<feature type="chain" id="PRO_5010144878" description="L-type lectin-domain containing receptor kinase SIT2">
    <location>
        <begin position="28"/>
        <end position="673"/>
    </location>
</feature>
<feature type="topological domain" description="Extracellular" evidence="7">
    <location>
        <begin position="28"/>
        <end position="296"/>
    </location>
</feature>
<feature type="transmembrane region" description="Helical" evidence="2">
    <location>
        <begin position="297"/>
        <end position="317"/>
    </location>
</feature>
<feature type="topological domain" description="Cytoplasmic" evidence="7">
    <location>
        <begin position="318"/>
        <end position="673"/>
    </location>
</feature>
<feature type="domain" description="Protein kinase" evidence="3">
    <location>
        <begin position="352"/>
        <end position="631"/>
    </location>
</feature>
<feature type="region of interest" description="Legume-lectin like" evidence="7">
    <location>
        <begin position="32"/>
        <end position="270"/>
    </location>
</feature>
<feature type="active site" description="Proton acceptor" evidence="3">
    <location>
        <position position="477"/>
    </location>
</feature>
<feature type="binding site" evidence="3">
    <location>
        <begin position="358"/>
        <end position="366"/>
    </location>
    <ligand>
        <name>ATP</name>
        <dbReference type="ChEBI" id="CHEBI:30616"/>
    </ligand>
</feature>
<feature type="binding site" evidence="3">
    <location>
        <position position="381"/>
    </location>
    <ligand>
        <name>ATP</name>
        <dbReference type="ChEBI" id="CHEBI:30616"/>
    </ligand>
</feature>
<feature type="glycosylation site" description="N-linked (GlcNAc...) asparagine" evidence="4">
    <location>
        <position position="41"/>
    </location>
</feature>
<feature type="glycosylation site" description="N-linked (GlcNAc...) asparagine" evidence="4">
    <location>
        <position position="60"/>
    </location>
</feature>
<feature type="glycosylation site" description="N-linked (GlcNAc...) asparagine" evidence="4">
    <location>
        <position position="82"/>
    </location>
</feature>
<feature type="glycosylation site" description="N-linked (GlcNAc...) asparagine" evidence="4">
    <location>
        <position position="118"/>
    </location>
</feature>
<feature type="glycosylation site" description="N-linked (GlcNAc...) asparagine" evidence="4">
    <location>
        <position position="138"/>
    </location>
</feature>
<feature type="glycosylation site" description="N-linked (GlcNAc...) asparagine" evidence="4">
    <location>
        <position position="191"/>
    </location>
</feature>
<feature type="glycosylation site" description="N-linked (GlcNAc...) asparagine" evidence="4">
    <location>
        <position position="214"/>
    </location>
</feature>
<feature type="glycosylation site" description="N-linked (GlcNAc...) asparagine" evidence="4">
    <location>
        <position position="235"/>
    </location>
</feature>
<feature type="glycosylation site" description="N-linked (GlcNAc...) asparagine" evidence="4">
    <location>
        <position position="276"/>
    </location>
</feature>
<proteinExistence type="evidence at transcript level"/>
<keyword id="KW-0067">ATP-binding</keyword>
<keyword id="KW-1003">Cell membrane</keyword>
<keyword id="KW-0325">Glycoprotein</keyword>
<keyword id="KW-0418">Kinase</keyword>
<keyword id="KW-0430">Lectin</keyword>
<keyword id="KW-0472">Membrane</keyword>
<keyword id="KW-0547">Nucleotide-binding</keyword>
<keyword id="KW-0675">Receptor</keyword>
<keyword id="KW-1185">Reference proteome</keyword>
<keyword id="KW-0723">Serine/threonine-protein kinase</keyword>
<keyword id="KW-0732">Signal</keyword>
<keyword id="KW-0808">Transferase</keyword>
<keyword id="KW-0812">Transmembrane</keyword>
<keyword id="KW-1133">Transmembrane helix</keyword>
<protein>
    <recommendedName>
        <fullName evidence="7">L-type lectin-domain containing receptor kinase SIT2</fullName>
        <ecNumber evidence="1">2.7.11.1</ecNumber>
    </recommendedName>
    <alternativeName>
        <fullName evidence="6">Protein SALT INTOLERANCE 2</fullName>
    </alternativeName>
</protein>
<reference key="1">
    <citation type="journal article" date="2002" name="Nature">
        <title>Sequence and analysis of rice chromosome 4.</title>
        <authorList>
            <person name="Feng Q."/>
            <person name="Zhang Y."/>
            <person name="Hao P."/>
            <person name="Wang S."/>
            <person name="Fu G."/>
            <person name="Huang Y."/>
            <person name="Li Y."/>
            <person name="Zhu J."/>
            <person name="Liu Y."/>
            <person name="Hu X."/>
            <person name="Jia P."/>
            <person name="Zhang Y."/>
            <person name="Zhao Q."/>
            <person name="Ying K."/>
            <person name="Yu S."/>
            <person name="Tang Y."/>
            <person name="Weng Q."/>
            <person name="Zhang L."/>
            <person name="Lu Y."/>
            <person name="Mu J."/>
            <person name="Lu Y."/>
            <person name="Zhang L.S."/>
            <person name="Yu Z."/>
            <person name="Fan D."/>
            <person name="Liu X."/>
            <person name="Lu T."/>
            <person name="Li C."/>
            <person name="Wu Y."/>
            <person name="Sun T."/>
            <person name="Lei H."/>
            <person name="Li T."/>
            <person name="Hu H."/>
            <person name="Guan J."/>
            <person name="Wu M."/>
            <person name="Zhang R."/>
            <person name="Zhou B."/>
            <person name="Chen Z."/>
            <person name="Chen L."/>
            <person name="Jin Z."/>
            <person name="Wang R."/>
            <person name="Yin H."/>
            <person name="Cai Z."/>
            <person name="Ren S."/>
            <person name="Lv G."/>
            <person name="Gu W."/>
            <person name="Zhu G."/>
            <person name="Tu Y."/>
            <person name="Jia J."/>
            <person name="Zhang Y."/>
            <person name="Chen J."/>
            <person name="Kang H."/>
            <person name="Chen X."/>
            <person name="Shao C."/>
            <person name="Sun Y."/>
            <person name="Hu Q."/>
            <person name="Zhang X."/>
            <person name="Zhang W."/>
            <person name="Wang L."/>
            <person name="Ding C."/>
            <person name="Sheng H."/>
            <person name="Gu J."/>
            <person name="Chen S."/>
            <person name="Ni L."/>
            <person name="Zhu F."/>
            <person name="Chen W."/>
            <person name="Lan L."/>
            <person name="Lai Y."/>
            <person name="Cheng Z."/>
            <person name="Gu M."/>
            <person name="Jiang J."/>
            <person name="Li J."/>
            <person name="Hong G."/>
            <person name="Xue Y."/>
            <person name="Han B."/>
        </authorList>
    </citation>
    <scope>NUCLEOTIDE SEQUENCE [LARGE SCALE GENOMIC DNA]</scope>
    <source>
        <strain>cv. Nipponbare</strain>
    </source>
</reference>
<reference key="2">
    <citation type="journal article" date="2005" name="Nature">
        <title>The map-based sequence of the rice genome.</title>
        <authorList>
            <consortium name="International rice genome sequencing project (IRGSP)"/>
        </authorList>
    </citation>
    <scope>NUCLEOTIDE SEQUENCE [LARGE SCALE GENOMIC DNA]</scope>
    <source>
        <strain>cv. Nipponbare</strain>
    </source>
</reference>
<reference key="3">
    <citation type="journal article" date="2008" name="Nucleic Acids Res.">
        <title>The rice annotation project database (RAP-DB): 2008 update.</title>
        <authorList>
            <consortium name="The rice annotation project (RAP)"/>
        </authorList>
    </citation>
    <scope>GENOME REANNOTATION</scope>
    <source>
        <strain>cv. Nipponbare</strain>
    </source>
</reference>
<reference key="4">
    <citation type="journal article" date="2013" name="Rice">
        <title>Improvement of the Oryza sativa Nipponbare reference genome using next generation sequence and optical map data.</title>
        <authorList>
            <person name="Kawahara Y."/>
            <person name="de la Bastide M."/>
            <person name="Hamilton J.P."/>
            <person name="Kanamori H."/>
            <person name="McCombie W.R."/>
            <person name="Ouyang S."/>
            <person name="Schwartz D.C."/>
            <person name="Tanaka T."/>
            <person name="Wu J."/>
            <person name="Zhou S."/>
            <person name="Childs K.L."/>
            <person name="Davidson R.M."/>
            <person name="Lin H."/>
            <person name="Quesada-Ocampo L."/>
            <person name="Vaillancourt B."/>
            <person name="Sakai H."/>
            <person name="Lee S.S."/>
            <person name="Kim J."/>
            <person name="Numa H."/>
            <person name="Itoh T."/>
            <person name="Buell C.R."/>
            <person name="Matsumoto T."/>
        </authorList>
    </citation>
    <scope>GENOME REANNOTATION</scope>
    <source>
        <strain>cv. Nipponbare</strain>
    </source>
</reference>
<reference key="5">
    <citation type="journal article" date="2005" name="PLoS Biol.">
        <title>The genomes of Oryza sativa: a history of duplications.</title>
        <authorList>
            <person name="Yu J."/>
            <person name="Wang J."/>
            <person name="Lin W."/>
            <person name="Li S."/>
            <person name="Li H."/>
            <person name="Zhou J."/>
            <person name="Ni P."/>
            <person name="Dong W."/>
            <person name="Hu S."/>
            <person name="Zeng C."/>
            <person name="Zhang J."/>
            <person name="Zhang Y."/>
            <person name="Li R."/>
            <person name="Xu Z."/>
            <person name="Li S."/>
            <person name="Li X."/>
            <person name="Zheng H."/>
            <person name="Cong L."/>
            <person name="Lin L."/>
            <person name="Yin J."/>
            <person name="Geng J."/>
            <person name="Li G."/>
            <person name="Shi J."/>
            <person name="Liu J."/>
            <person name="Lv H."/>
            <person name="Li J."/>
            <person name="Wang J."/>
            <person name="Deng Y."/>
            <person name="Ran L."/>
            <person name="Shi X."/>
            <person name="Wang X."/>
            <person name="Wu Q."/>
            <person name="Li C."/>
            <person name="Ren X."/>
            <person name="Wang J."/>
            <person name="Wang X."/>
            <person name="Li D."/>
            <person name="Liu D."/>
            <person name="Zhang X."/>
            <person name="Ji Z."/>
            <person name="Zhao W."/>
            <person name="Sun Y."/>
            <person name="Zhang Z."/>
            <person name="Bao J."/>
            <person name="Han Y."/>
            <person name="Dong L."/>
            <person name="Ji J."/>
            <person name="Chen P."/>
            <person name="Wu S."/>
            <person name="Liu J."/>
            <person name="Xiao Y."/>
            <person name="Bu D."/>
            <person name="Tan J."/>
            <person name="Yang L."/>
            <person name="Ye C."/>
            <person name="Zhang J."/>
            <person name="Xu J."/>
            <person name="Zhou Y."/>
            <person name="Yu Y."/>
            <person name="Zhang B."/>
            <person name="Zhuang S."/>
            <person name="Wei H."/>
            <person name="Liu B."/>
            <person name="Lei M."/>
            <person name="Yu H."/>
            <person name="Li Y."/>
            <person name="Xu H."/>
            <person name="Wei S."/>
            <person name="He X."/>
            <person name="Fang L."/>
            <person name="Zhang Z."/>
            <person name="Zhang Y."/>
            <person name="Huang X."/>
            <person name="Su Z."/>
            <person name="Tong W."/>
            <person name="Li J."/>
            <person name="Tong Z."/>
            <person name="Li S."/>
            <person name="Ye J."/>
            <person name="Wang L."/>
            <person name="Fang L."/>
            <person name="Lei T."/>
            <person name="Chen C.-S."/>
            <person name="Chen H.-C."/>
            <person name="Xu Z."/>
            <person name="Li H."/>
            <person name="Huang H."/>
            <person name="Zhang F."/>
            <person name="Xu H."/>
            <person name="Li N."/>
            <person name="Zhao C."/>
            <person name="Li S."/>
            <person name="Dong L."/>
            <person name="Huang Y."/>
            <person name="Li L."/>
            <person name="Xi Y."/>
            <person name="Qi Q."/>
            <person name="Li W."/>
            <person name="Zhang B."/>
            <person name="Hu W."/>
            <person name="Zhang Y."/>
            <person name="Tian X."/>
            <person name="Jiao Y."/>
            <person name="Liang X."/>
            <person name="Jin J."/>
            <person name="Gao L."/>
            <person name="Zheng W."/>
            <person name="Hao B."/>
            <person name="Liu S.-M."/>
            <person name="Wang W."/>
            <person name="Yuan L."/>
            <person name="Cao M."/>
            <person name="McDermott J."/>
            <person name="Samudrala R."/>
            <person name="Wang J."/>
            <person name="Wong G.K.-S."/>
            <person name="Yang H."/>
        </authorList>
    </citation>
    <scope>NUCLEOTIDE SEQUENCE [LARGE SCALE GENOMIC DNA]</scope>
    <source>
        <strain>cv. Nipponbare</strain>
    </source>
</reference>
<reference key="6">
    <citation type="journal article" date="2014" name="Plant Cell">
        <title>The receptor-like kinase SIT1 mediates salt sensitivity by activating MAPK3/6 and regulating ethylene homeostasis in rice.</title>
        <authorList>
            <person name="Li C.H."/>
            <person name="Wang G."/>
            <person name="Zhao J.L."/>
            <person name="Zhang L.Q."/>
            <person name="Ai L.F."/>
            <person name="Han Y.F."/>
            <person name="Sun D.Y."/>
            <person name="Zhang S.W."/>
            <person name="Sun Y."/>
        </authorList>
    </citation>
    <scope>FUNCTION</scope>
    <scope>TISSUE SPECIFICITY</scope>
    <scope>INDUCTION BY SALT STRESS</scope>
</reference>
<organism>
    <name type="scientific">Oryza sativa subsp. japonica</name>
    <name type="common">Rice</name>
    <dbReference type="NCBI Taxonomy" id="39947"/>
    <lineage>
        <taxon>Eukaryota</taxon>
        <taxon>Viridiplantae</taxon>
        <taxon>Streptophyta</taxon>
        <taxon>Embryophyta</taxon>
        <taxon>Tracheophyta</taxon>
        <taxon>Spermatophyta</taxon>
        <taxon>Magnoliopsida</taxon>
        <taxon>Liliopsida</taxon>
        <taxon>Poales</taxon>
        <taxon>Poaceae</taxon>
        <taxon>BOP clade</taxon>
        <taxon>Oryzoideae</taxon>
        <taxon>Oryzeae</taxon>
        <taxon>Oryzinae</taxon>
        <taxon>Oryza</taxon>
        <taxon>Oryza sativa</taxon>
    </lineage>
</organism>
<sequence length="673" mass="73872">MVLPKPEMPFFVLLLFLGLGCLRPAAATDERFVFNGFTGANLSFDGMATVTSNGLLMLTNGTNQLKGHAFFPSPLQFQRGPNSTAMQSFSTAFVIGIIGAFEDLSSHGMAFIIAKSKNLTSALPGQFMGLVNSANNGNATNHLFAVEFDTILNSEFNDMSGNHVGIDVNGLNSVDADNAGYYDDGTGDFKNMSLVSRRPMQVWVDFDGQTMQVNVTMAPLEVARPKKPLLSKIVNISSVIDDTAYVGFSSATGILFCRHYVLGWSFKMNGAAPALNISSLPSLPVTFPKPRSKTLEIVLPIASAVLVFAVAAAVFVFMRRRRMFSELKEEWEVTFGPHRFSYKDLFHATDGFSDKRLLGIGGFGRVYRGVLPSSKAEVAVKKVAHGSRQGMREFVAEVVSIGRLRHRNLVQLLGYCRRKGELLLVYDYMPNGSLDKQLYDQGKITLRWAQRFRIIRGVASGLLYLHEDWEQVVVHRDIKASNVLLDADMNGRLGDFGLARLYDHGTDPHTTHVVGTMGYLAPELGHTGKASKASDVFAFGAFMLEVACGRKPVAQDARDNRVVLVDWVLDRWRAGAITDTVDPRLHGDFVESEASLVLRLGLLCSHPLPGARPGTRQLVQYLEGDVPLPELSPTYQSFNMLALMQDQGFDPYVMSYPMTSTSAGTFSDLSGGR</sequence>